<organism>
    <name type="scientific">Pseudomonas fluorescens (strain Pf0-1)</name>
    <dbReference type="NCBI Taxonomy" id="205922"/>
    <lineage>
        <taxon>Bacteria</taxon>
        <taxon>Pseudomonadati</taxon>
        <taxon>Pseudomonadota</taxon>
        <taxon>Gammaproteobacteria</taxon>
        <taxon>Pseudomonadales</taxon>
        <taxon>Pseudomonadaceae</taxon>
        <taxon>Pseudomonas</taxon>
    </lineage>
</organism>
<sequence>MTSRWTTAVLDTDQPGGWAVARSPEGFLFDDNGVLFPREWLKRQDLSILAEHGIGHLDGEPVYLLELHSTSEVPGCNWKGLRAFMLDGDHTIYKVLGYAAQIGTWAREHRFCGNCGQAMTQVPRERAMYCQPCDLRSYPRISPSMIVLVTRGDEVLLARSPRFVTGVYSTLAGFAEPGESAEDCLIREVREEVQIEVKNIQYMGSQCWPFPHSMMLGFHAEYAGGEIVCQEDEIEDAQWFNVHDLPPLPASKSIARYLIDVYVARRLGHAEPVLPG</sequence>
<evidence type="ECO:0000255" key="1">
    <source>
        <dbReference type="HAMAP-Rule" id="MF_00297"/>
    </source>
</evidence>
<reference key="1">
    <citation type="journal article" date="2009" name="Genome Biol.">
        <title>Genomic and genetic analyses of diversity and plant interactions of Pseudomonas fluorescens.</title>
        <authorList>
            <person name="Silby M.W."/>
            <person name="Cerdeno-Tarraga A.M."/>
            <person name="Vernikos G.S."/>
            <person name="Giddens S.R."/>
            <person name="Jackson R.W."/>
            <person name="Preston G.M."/>
            <person name="Zhang X.-X."/>
            <person name="Moon C.D."/>
            <person name="Gehrig S.M."/>
            <person name="Godfrey S.A.C."/>
            <person name="Knight C.G."/>
            <person name="Malone J.G."/>
            <person name="Robinson Z."/>
            <person name="Spiers A.J."/>
            <person name="Harris S."/>
            <person name="Challis G.L."/>
            <person name="Yaxley A.M."/>
            <person name="Harris D."/>
            <person name="Seeger K."/>
            <person name="Murphy L."/>
            <person name="Rutter S."/>
            <person name="Squares R."/>
            <person name="Quail M.A."/>
            <person name="Saunders E."/>
            <person name="Mavromatis K."/>
            <person name="Brettin T.S."/>
            <person name="Bentley S.D."/>
            <person name="Hothersall J."/>
            <person name="Stephens E."/>
            <person name="Thomas C.M."/>
            <person name="Parkhill J."/>
            <person name="Levy S.B."/>
            <person name="Rainey P.B."/>
            <person name="Thomson N.R."/>
        </authorList>
    </citation>
    <scope>NUCLEOTIDE SEQUENCE [LARGE SCALE GENOMIC DNA]</scope>
    <source>
        <strain>Pf0-1</strain>
    </source>
</reference>
<dbReference type="EC" id="3.6.1.-" evidence="1"/>
<dbReference type="EC" id="3.6.1.22" evidence="1"/>
<dbReference type="EMBL" id="CP000094">
    <property type="protein sequence ID" value="ABA74622.1"/>
    <property type="molecule type" value="Genomic_DNA"/>
</dbReference>
<dbReference type="RefSeq" id="WP_011334291.1">
    <property type="nucleotide sequence ID" value="NC_007492.2"/>
</dbReference>
<dbReference type="SMR" id="Q3KC83"/>
<dbReference type="KEGG" id="pfo:Pfl01_2881"/>
<dbReference type="eggNOG" id="COG2816">
    <property type="taxonomic scope" value="Bacteria"/>
</dbReference>
<dbReference type="HOGENOM" id="CLU_037162_0_1_6"/>
<dbReference type="Proteomes" id="UP000002704">
    <property type="component" value="Chromosome"/>
</dbReference>
<dbReference type="GO" id="GO:0005829">
    <property type="term" value="C:cytosol"/>
    <property type="evidence" value="ECO:0007669"/>
    <property type="project" value="TreeGrafter"/>
</dbReference>
<dbReference type="GO" id="GO:0000287">
    <property type="term" value="F:magnesium ion binding"/>
    <property type="evidence" value="ECO:0007669"/>
    <property type="project" value="UniProtKB-UniRule"/>
</dbReference>
<dbReference type="GO" id="GO:0030145">
    <property type="term" value="F:manganese ion binding"/>
    <property type="evidence" value="ECO:0007669"/>
    <property type="project" value="UniProtKB-UniRule"/>
</dbReference>
<dbReference type="GO" id="GO:0000210">
    <property type="term" value="F:NAD+ diphosphatase activity"/>
    <property type="evidence" value="ECO:0007669"/>
    <property type="project" value="UniProtKB-UniRule"/>
</dbReference>
<dbReference type="GO" id="GO:0035529">
    <property type="term" value="F:NADH pyrophosphatase activity"/>
    <property type="evidence" value="ECO:0007669"/>
    <property type="project" value="TreeGrafter"/>
</dbReference>
<dbReference type="GO" id="GO:0110153">
    <property type="term" value="F:RNA NAD-cap (NMN-forming) hydrolase activity"/>
    <property type="evidence" value="ECO:0007669"/>
    <property type="project" value="RHEA"/>
</dbReference>
<dbReference type="GO" id="GO:0008270">
    <property type="term" value="F:zinc ion binding"/>
    <property type="evidence" value="ECO:0007669"/>
    <property type="project" value="UniProtKB-UniRule"/>
</dbReference>
<dbReference type="GO" id="GO:0019677">
    <property type="term" value="P:NAD catabolic process"/>
    <property type="evidence" value="ECO:0007669"/>
    <property type="project" value="TreeGrafter"/>
</dbReference>
<dbReference type="GO" id="GO:0006734">
    <property type="term" value="P:NADH metabolic process"/>
    <property type="evidence" value="ECO:0007669"/>
    <property type="project" value="TreeGrafter"/>
</dbReference>
<dbReference type="GO" id="GO:0006742">
    <property type="term" value="P:NADP catabolic process"/>
    <property type="evidence" value="ECO:0007669"/>
    <property type="project" value="TreeGrafter"/>
</dbReference>
<dbReference type="CDD" id="cd03429">
    <property type="entry name" value="NUDIX_NADH_pyrophosphatase_Nudt13"/>
    <property type="match status" value="1"/>
</dbReference>
<dbReference type="Gene3D" id="3.90.79.20">
    <property type="match status" value="1"/>
</dbReference>
<dbReference type="Gene3D" id="3.90.79.10">
    <property type="entry name" value="Nucleoside Triphosphate Pyrophosphohydrolase"/>
    <property type="match status" value="1"/>
</dbReference>
<dbReference type="HAMAP" id="MF_00297">
    <property type="entry name" value="Nudix_NudC"/>
    <property type="match status" value="1"/>
</dbReference>
<dbReference type="InterPro" id="IPR050241">
    <property type="entry name" value="NAD-cap_RNA_hydrolase_NudC"/>
</dbReference>
<dbReference type="InterPro" id="IPR015375">
    <property type="entry name" value="NADH_PPase-like_N"/>
</dbReference>
<dbReference type="InterPro" id="IPR049734">
    <property type="entry name" value="NudC-like_C"/>
</dbReference>
<dbReference type="InterPro" id="IPR015797">
    <property type="entry name" value="NUDIX_hydrolase-like_dom_sf"/>
</dbReference>
<dbReference type="InterPro" id="IPR000086">
    <property type="entry name" value="NUDIX_hydrolase_dom"/>
</dbReference>
<dbReference type="InterPro" id="IPR022925">
    <property type="entry name" value="RNA_Hydrolase_NudC"/>
</dbReference>
<dbReference type="InterPro" id="IPR015376">
    <property type="entry name" value="Znr_NADH_PPase"/>
</dbReference>
<dbReference type="NCBIfam" id="NF001299">
    <property type="entry name" value="PRK00241.1"/>
    <property type="match status" value="1"/>
</dbReference>
<dbReference type="PANTHER" id="PTHR42904:SF6">
    <property type="entry name" value="NAD-CAPPED RNA HYDROLASE NUDT12"/>
    <property type="match status" value="1"/>
</dbReference>
<dbReference type="PANTHER" id="PTHR42904">
    <property type="entry name" value="NUDIX HYDROLASE, NUDC SUBFAMILY"/>
    <property type="match status" value="1"/>
</dbReference>
<dbReference type="Pfam" id="PF00293">
    <property type="entry name" value="NUDIX"/>
    <property type="match status" value="1"/>
</dbReference>
<dbReference type="Pfam" id="PF09296">
    <property type="entry name" value="NUDIX-like"/>
    <property type="match status" value="1"/>
</dbReference>
<dbReference type="Pfam" id="PF09297">
    <property type="entry name" value="Zn_ribbon_NUD"/>
    <property type="match status" value="1"/>
</dbReference>
<dbReference type="SUPFAM" id="SSF55811">
    <property type="entry name" value="Nudix"/>
    <property type="match status" value="2"/>
</dbReference>
<dbReference type="PROSITE" id="PS51462">
    <property type="entry name" value="NUDIX"/>
    <property type="match status" value="1"/>
</dbReference>
<proteinExistence type="inferred from homology"/>
<keyword id="KW-0378">Hydrolase</keyword>
<keyword id="KW-0460">Magnesium</keyword>
<keyword id="KW-0464">Manganese</keyword>
<keyword id="KW-0479">Metal-binding</keyword>
<keyword id="KW-0520">NAD</keyword>
<keyword id="KW-0862">Zinc</keyword>
<gene>
    <name evidence="1" type="primary">nudC</name>
    <name type="ordered locus">Pfl01_2881</name>
</gene>
<protein>
    <recommendedName>
        <fullName evidence="1">NAD-capped RNA hydrolase NudC</fullName>
        <shortName evidence="1">DeNADding enzyme NudC</shortName>
        <ecNumber evidence="1">3.6.1.-</ecNumber>
    </recommendedName>
    <alternativeName>
        <fullName evidence="1">NADH pyrophosphatase</fullName>
        <ecNumber evidence="1">3.6.1.22</ecNumber>
    </alternativeName>
</protein>
<name>NUDC_PSEPF</name>
<feature type="chain" id="PRO_1000071962" description="NAD-capped RNA hydrolase NudC">
    <location>
        <begin position="1"/>
        <end position="276"/>
    </location>
</feature>
<feature type="domain" description="Nudix hydrolase" evidence="1">
    <location>
        <begin position="139"/>
        <end position="262"/>
    </location>
</feature>
<feature type="short sequence motif" description="Nudix box" evidence="1">
    <location>
        <begin position="173"/>
        <end position="194"/>
    </location>
</feature>
<feature type="binding site" evidence="1">
    <location>
        <position position="82"/>
    </location>
    <ligand>
        <name>substrate</name>
    </ligand>
</feature>
<feature type="binding site" evidence="1">
    <location>
        <position position="112"/>
    </location>
    <ligand>
        <name>Zn(2+)</name>
        <dbReference type="ChEBI" id="CHEBI:29105"/>
    </ligand>
</feature>
<feature type="binding site" evidence="1">
    <location>
        <position position="115"/>
    </location>
    <ligand>
        <name>Zn(2+)</name>
        <dbReference type="ChEBI" id="CHEBI:29105"/>
    </ligand>
</feature>
<feature type="binding site" evidence="1">
    <location>
        <position position="125"/>
    </location>
    <ligand>
        <name>substrate</name>
    </ligand>
</feature>
<feature type="binding site" evidence="1">
    <location>
        <position position="130"/>
    </location>
    <ligand>
        <name>Zn(2+)</name>
        <dbReference type="ChEBI" id="CHEBI:29105"/>
    </ligand>
</feature>
<feature type="binding site" evidence="1">
    <location>
        <position position="133"/>
    </location>
    <ligand>
        <name>Zn(2+)</name>
        <dbReference type="ChEBI" id="CHEBI:29105"/>
    </ligand>
</feature>
<feature type="binding site" evidence="1">
    <location>
        <position position="138"/>
    </location>
    <ligand>
        <name>substrate</name>
    </ligand>
</feature>
<feature type="binding site" evidence="1">
    <location>
        <position position="172"/>
    </location>
    <ligand>
        <name>a divalent metal cation</name>
        <dbReference type="ChEBI" id="CHEBI:60240"/>
        <label>1</label>
    </ligand>
</feature>
<feature type="binding site" evidence="1">
    <location>
        <position position="188"/>
    </location>
    <ligand>
        <name>a divalent metal cation</name>
        <dbReference type="ChEBI" id="CHEBI:60240"/>
        <label>2</label>
    </ligand>
</feature>
<feature type="binding site" evidence="1">
    <location>
        <position position="188"/>
    </location>
    <ligand>
        <name>a divalent metal cation</name>
        <dbReference type="ChEBI" id="CHEBI:60240"/>
        <label>3</label>
    </ligand>
</feature>
<feature type="binding site" evidence="1">
    <location>
        <position position="192"/>
    </location>
    <ligand>
        <name>a divalent metal cation</name>
        <dbReference type="ChEBI" id="CHEBI:60240"/>
        <label>1</label>
    </ligand>
</feature>
<feature type="binding site" evidence="1">
    <location>
        <position position="192"/>
    </location>
    <ligand>
        <name>a divalent metal cation</name>
        <dbReference type="ChEBI" id="CHEBI:60240"/>
        <label>3</label>
    </ligand>
</feature>
<feature type="binding site" evidence="1">
    <location>
        <begin position="206"/>
        <end position="213"/>
    </location>
    <ligand>
        <name>substrate</name>
    </ligand>
</feature>
<feature type="binding site" evidence="1">
    <location>
        <position position="233"/>
    </location>
    <ligand>
        <name>a divalent metal cation</name>
        <dbReference type="ChEBI" id="CHEBI:60240"/>
        <label>1</label>
    </ligand>
</feature>
<feature type="binding site" evidence="1">
    <location>
        <position position="233"/>
    </location>
    <ligand>
        <name>a divalent metal cation</name>
        <dbReference type="ChEBI" id="CHEBI:60240"/>
        <label>3</label>
    </ligand>
</feature>
<feature type="binding site" evidence="1">
    <location>
        <position position="255"/>
    </location>
    <ligand>
        <name>substrate</name>
    </ligand>
</feature>
<comment type="function">
    <text evidence="1">mRNA decapping enzyme that specifically removes the nicotinamide adenine dinucleotide (NAD) cap from a subset of mRNAs by hydrolyzing the diphosphate linkage to produce nicotinamide mononucleotide (NMN) and 5' monophosphate mRNA. The NAD-cap is present at the 5'-end of some mRNAs and stabilizes RNA against 5'-processing. Has preference for mRNAs with a 5'-end purine. Catalyzes the hydrolysis of a broad range of dinucleotide pyrophosphates.</text>
</comment>
<comment type="catalytic activity">
    <reaction evidence="1">
        <text>a 5'-end NAD(+)-phospho-ribonucleoside in mRNA + H2O = a 5'-end phospho-adenosine-phospho-ribonucleoside in mRNA + beta-nicotinamide D-ribonucleotide + 2 H(+)</text>
        <dbReference type="Rhea" id="RHEA:60876"/>
        <dbReference type="Rhea" id="RHEA-COMP:15698"/>
        <dbReference type="Rhea" id="RHEA-COMP:15719"/>
        <dbReference type="ChEBI" id="CHEBI:14649"/>
        <dbReference type="ChEBI" id="CHEBI:15377"/>
        <dbReference type="ChEBI" id="CHEBI:15378"/>
        <dbReference type="ChEBI" id="CHEBI:144029"/>
        <dbReference type="ChEBI" id="CHEBI:144051"/>
    </reaction>
    <physiologicalReaction direction="left-to-right" evidence="1">
        <dbReference type="Rhea" id="RHEA:60877"/>
    </physiologicalReaction>
</comment>
<comment type="catalytic activity">
    <reaction evidence="1">
        <text>NAD(+) + H2O = beta-nicotinamide D-ribonucleotide + AMP + 2 H(+)</text>
        <dbReference type="Rhea" id="RHEA:11800"/>
        <dbReference type="ChEBI" id="CHEBI:14649"/>
        <dbReference type="ChEBI" id="CHEBI:15377"/>
        <dbReference type="ChEBI" id="CHEBI:15378"/>
        <dbReference type="ChEBI" id="CHEBI:57540"/>
        <dbReference type="ChEBI" id="CHEBI:456215"/>
        <dbReference type="EC" id="3.6.1.22"/>
    </reaction>
</comment>
<comment type="catalytic activity">
    <reaction evidence="1">
        <text>NADH + H2O = reduced beta-nicotinamide D-ribonucleotide + AMP + 2 H(+)</text>
        <dbReference type="Rhea" id="RHEA:48868"/>
        <dbReference type="ChEBI" id="CHEBI:15377"/>
        <dbReference type="ChEBI" id="CHEBI:15378"/>
        <dbReference type="ChEBI" id="CHEBI:57945"/>
        <dbReference type="ChEBI" id="CHEBI:90832"/>
        <dbReference type="ChEBI" id="CHEBI:456215"/>
        <dbReference type="EC" id="3.6.1.22"/>
    </reaction>
</comment>
<comment type="cofactor">
    <cofactor evidence="1">
        <name>Mg(2+)</name>
        <dbReference type="ChEBI" id="CHEBI:18420"/>
    </cofactor>
    <cofactor evidence="1">
        <name>Mn(2+)</name>
        <dbReference type="ChEBI" id="CHEBI:29035"/>
    </cofactor>
    <text evidence="1">Divalent metal cations. Mg(2+) or Mn(2+).</text>
</comment>
<comment type="cofactor">
    <cofactor evidence="1">
        <name>Zn(2+)</name>
        <dbReference type="ChEBI" id="CHEBI:29105"/>
    </cofactor>
    <text evidence="1">Binds 1 zinc ion per subunit.</text>
</comment>
<comment type="subunit">
    <text evidence="1">Homodimer.</text>
</comment>
<comment type="similarity">
    <text evidence="1">Belongs to the Nudix hydrolase family. NudC subfamily.</text>
</comment>
<accession>Q3KC83</accession>